<name>RL5_COLP3</name>
<organism>
    <name type="scientific">Colwellia psychrerythraea (strain 34H / ATCC BAA-681)</name>
    <name type="common">Vibrio psychroerythus</name>
    <dbReference type="NCBI Taxonomy" id="167879"/>
    <lineage>
        <taxon>Bacteria</taxon>
        <taxon>Pseudomonadati</taxon>
        <taxon>Pseudomonadota</taxon>
        <taxon>Gammaproteobacteria</taxon>
        <taxon>Alteromonadales</taxon>
        <taxon>Colwelliaceae</taxon>
        <taxon>Colwellia</taxon>
    </lineage>
</organism>
<keyword id="KW-0687">Ribonucleoprotein</keyword>
<keyword id="KW-0689">Ribosomal protein</keyword>
<keyword id="KW-0694">RNA-binding</keyword>
<keyword id="KW-0699">rRNA-binding</keyword>
<keyword id="KW-0820">tRNA-binding</keyword>
<accession>Q489A1</accession>
<sequence>MAKLHDLYKDTVVAELQKQFGYKSVMQVPRIEKITLNMGVGEAISDKKVLEHATNDLTAISGQKPITTVARKSVAGFKIREGYPIGTKVTLRGERMWEFLERLISISIPRIRDFRGLNPKSFDGRGNYSMGVREQIIFPEIEYDKIDKIRGLDITITTSAKDNEEGLALLSAFDFPFKKKV</sequence>
<dbReference type="EMBL" id="CP000083">
    <property type="protein sequence ID" value="AAZ26957.1"/>
    <property type="molecule type" value="Genomic_DNA"/>
</dbReference>
<dbReference type="RefSeq" id="WP_011041463.1">
    <property type="nucleotide sequence ID" value="NC_003910.7"/>
</dbReference>
<dbReference type="SMR" id="Q489A1"/>
<dbReference type="STRING" id="167879.CPS_0613"/>
<dbReference type="KEGG" id="cps:CPS_0613"/>
<dbReference type="eggNOG" id="COG0094">
    <property type="taxonomic scope" value="Bacteria"/>
</dbReference>
<dbReference type="HOGENOM" id="CLU_061015_2_1_6"/>
<dbReference type="Proteomes" id="UP000000547">
    <property type="component" value="Chromosome"/>
</dbReference>
<dbReference type="GO" id="GO:1990904">
    <property type="term" value="C:ribonucleoprotein complex"/>
    <property type="evidence" value="ECO:0007669"/>
    <property type="project" value="UniProtKB-KW"/>
</dbReference>
<dbReference type="GO" id="GO:0005840">
    <property type="term" value="C:ribosome"/>
    <property type="evidence" value="ECO:0007669"/>
    <property type="project" value="UniProtKB-KW"/>
</dbReference>
<dbReference type="GO" id="GO:0019843">
    <property type="term" value="F:rRNA binding"/>
    <property type="evidence" value="ECO:0007669"/>
    <property type="project" value="UniProtKB-UniRule"/>
</dbReference>
<dbReference type="GO" id="GO:0003735">
    <property type="term" value="F:structural constituent of ribosome"/>
    <property type="evidence" value="ECO:0007669"/>
    <property type="project" value="InterPro"/>
</dbReference>
<dbReference type="GO" id="GO:0000049">
    <property type="term" value="F:tRNA binding"/>
    <property type="evidence" value="ECO:0007669"/>
    <property type="project" value="UniProtKB-UniRule"/>
</dbReference>
<dbReference type="GO" id="GO:0006412">
    <property type="term" value="P:translation"/>
    <property type="evidence" value="ECO:0007669"/>
    <property type="project" value="UniProtKB-UniRule"/>
</dbReference>
<dbReference type="FunFam" id="3.30.1440.10:FF:000001">
    <property type="entry name" value="50S ribosomal protein L5"/>
    <property type="match status" value="1"/>
</dbReference>
<dbReference type="Gene3D" id="3.30.1440.10">
    <property type="match status" value="1"/>
</dbReference>
<dbReference type="HAMAP" id="MF_01333_B">
    <property type="entry name" value="Ribosomal_uL5_B"/>
    <property type="match status" value="1"/>
</dbReference>
<dbReference type="InterPro" id="IPR002132">
    <property type="entry name" value="Ribosomal_uL5"/>
</dbReference>
<dbReference type="InterPro" id="IPR020930">
    <property type="entry name" value="Ribosomal_uL5_bac-type"/>
</dbReference>
<dbReference type="InterPro" id="IPR031309">
    <property type="entry name" value="Ribosomal_uL5_C"/>
</dbReference>
<dbReference type="InterPro" id="IPR020929">
    <property type="entry name" value="Ribosomal_uL5_CS"/>
</dbReference>
<dbReference type="InterPro" id="IPR022803">
    <property type="entry name" value="Ribosomal_uL5_dom_sf"/>
</dbReference>
<dbReference type="InterPro" id="IPR031310">
    <property type="entry name" value="Ribosomal_uL5_N"/>
</dbReference>
<dbReference type="NCBIfam" id="NF000585">
    <property type="entry name" value="PRK00010.1"/>
    <property type="match status" value="1"/>
</dbReference>
<dbReference type="PANTHER" id="PTHR11994">
    <property type="entry name" value="60S RIBOSOMAL PROTEIN L11-RELATED"/>
    <property type="match status" value="1"/>
</dbReference>
<dbReference type="Pfam" id="PF00281">
    <property type="entry name" value="Ribosomal_L5"/>
    <property type="match status" value="1"/>
</dbReference>
<dbReference type="Pfam" id="PF00673">
    <property type="entry name" value="Ribosomal_L5_C"/>
    <property type="match status" value="1"/>
</dbReference>
<dbReference type="PIRSF" id="PIRSF002161">
    <property type="entry name" value="Ribosomal_L5"/>
    <property type="match status" value="1"/>
</dbReference>
<dbReference type="SUPFAM" id="SSF55282">
    <property type="entry name" value="RL5-like"/>
    <property type="match status" value="1"/>
</dbReference>
<dbReference type="PROSITE" id="PS00358">
    <property type="entry name" value="RIBOSOMAL_L5"/>
    <property type="match status" value="1"/>
</dbReference>
<evidence type="ECO:0000255" key="1">
    <source>
        <dbReference type="HAMAP-Rule" id="MF_01333"/>
    </source>
</evidence>
<evidence type="ECO:0000305" key="2"/>
<gene>
    <name evidence="1" type="primary">rplE</name>
    <name type="ordered locus">CPS_0613</name>
</gene>
<comment type="function">
    <text evidence="1">This is one of the proteins that bind and probably mediate the attachment of the 5S RNA into the large ribosomal subunit, where it forms part of the central protuberance. In the 70S ribosome it contacts protein S13 of the 30S subunit (bridge B1b), connecting the 2 subunits; this bridge is implicated in subunit movement. Contacts the P site tRNA; the 5S rRNA and some of its associated proteins might help stabilize positioning of ribosome-bound tRNAs.</text>
</comment>
<comment type="subunit">
    <text evidence="1">Part of the 50S ribosomal subunit; part of the 5S rRNA/L5/L18/L25 subcomplex. Contacts the 5S rRNA and the P site tRNA. Forms a bridge to the 30S subunit in the 70S ribosome.</text>
</comment>
<comment type="similarity">
    <text evidence="1">Belongs to the universal ribosomal protein uL5 family.</text>
</comment>
<proteinExistence type="inferred from homology"/>
<protein>
    <recommendedName>
        <fullName evidence="1">Large ribosomal subunit protein uL5</fullName>
    </recommendedName>
    <alternativeName>
        <fullName evidence="2">50S ribosomal protein L5</fullName>
    </alternativeName>
</protein>
<reference key="1">
    <citation type="journal article" date="2005" name="Proc. Natl. Acad. Sci. U.S.A.">
        <title>The psychrophilic lifestyle as revealed by the genome sequence of Colwellia psychrerythraea 34H through genomic and proteomic analyses.</title>
        <authorList>
            <person name="Methe B.A."/>
            <person name="Nelson K.E."/>
            <person name="Deming J.W."/>
            <person name="Momen B."/>
            <person name="Melamud E."/>
            <person name="Zhang X."/>
            <person name="Moult J."/>
            <person name="Madupu R."/>
            <person name="Nelson W.C."/>
            <person name="Dodson R.J."/>
            <person name="Brinkac L.M."/>
            <person name="Daugherty S.C."/>
            <person name="Durkin A.S."/>
            <person name="DeBoy R.T."/>
            <person name="Kolonay J.F."/>
            <person name="Sullivan S.A."/>
            <person name="Zhou L."/>
            <person name="Davidsen T.M."/>
            <person name="Wu M."/>
            <person name="Huston A.L."/>
            <person name="Lewis M."/>
            <person name="Weaver B."/>
            <person name="Weidman J.F."/>
            <person name="Khouri H."/>
            <person name="Utterback T.R."/>
            <person name="Feldblyum T.V."/>
            <person name="Fraser C.M."/>
        </authorList>
    </citation>
    <scope>NUCLEOTIDE SEQUENCE [LARGE SCALE GENOMIC DNA]</scope>
    <source>
        <strain>34H / ATCC BAA-681</strain>
    </source>
</reference>
<feature type="chain" id="PRO_0000242989" description="Large ribosomal subunit protein uL5">
    <location>
        <begin position="1"/>
        <end position="181"/>
    </location>
</feature>